<evidence type="ECO:0000250" key="1"/>
<evidence type="ECO:0000255" key="2">
    <source>
        <dbReference type="PROSITE-ProRule" id="PRU00053"/>
    </source>
</evidence>
<evidence type="ECO:0000255" key="3">
    <source>
        <dbReference type="PROSITE-ProRule" id="PRU00155"/>
    </source>
</evidence>
<evidence type="ECO:0000255" key="4">
    <source>
        <dbReference type="PROSITE-ProRule" id="PRU00157"/>
    </source>
</evidence>
<evidence type="ECO:0000255" key="5">
    <source>
        <dbReference type="PROSITE-ProRule" id="PRU00190"/>
    </source>
</evidence>
<evidence type="ECO:0000255" key="6">
    <source>
        <dbReference type="PROSITE-ProRule" id="PRU00912"/>
    </source>
</evidence>
<evidence type="ECO:0000305" key="7"/>
<name>SUV92_XENTR</name>
<protein>
    <recommendedName>
        <fullName>Histone-lysine N-methyltransferase SUV39H2</fullName>
        <ecNumber>2.1.1.355</ecNumber>
    </recommendedName>
    <alternativeName>
        <fullName>Suppressor of variegation 3-9 homolog 2</fullName>
        <shortName>Su(var)3-9 homolog 2</shortName>
    </alternativeName>
</protein>
<accession>Q28CQ7</accession>
<proteinExistence type="evidence at transcript level"/>
<keyword id="KW-0131">Cell cycle</keyword>
<keyword id="KW-0137">Centromere</keyword>
<keyword id="KW-0156">Chromatin regulator</keyword>
<keyword id="KW-0158">Chromosome</keyword>
<keyword id="KW-0221">Differentiation</keyword>
<keyword id="KW-0479">Metal-binding</keyword>
<keyword id="KW-0489">Methyltransferase</keyword>
<keyword id="KW-0539">Nucleus</keyword>
<keyword id="KW-1185">Reference proteome</keyword>
<keyword id="KW-0678">Repressor</keyword>
<keyword id="KW-0949">S-adenosyl-L-methionine</keyword>
<keyword id="KW-0804">Transcription</keyword>
<keyword id="KW-0805">Transcription regulation</keyword>
<keyword id="KW-0808">Transferase</keyword>
<keyword id="KW-0862">Zinc</keyword>
<gene>
    <name type="primary">suv39h2</name>
    <name type="ORF">TEgg055l20.1</name>
</gene>
<reference key="1">
    <citation type="submission" date="2006-10" db="EMBL/GenBank/DDBJ databases">
        <authorList>
            <consortium name="Sanger Xenopus tropicalis EST/cDNA project"/>
        </authorList>
    </citation>
    <scope>NUCLEOTIDE SEQUENCE [LARGE SCALE MRNA]</scope>
    <source>
        <tissue>Egg</tissue>
    </source>
</reference>
<dbReference type="EC" id="2.1.1.355"/>
<dbReference type="EMBL" id="CR926249">
    <property type="protein sequence ID" value="CAJ81421.1"/>
    <property type="status" value="ALT_INIT"/>
    <property type="molecule type" value="mRNA"/>
</dbReference>
<dbReference type="RefSeq" id="NP_001016508.1">
    <property type="nucleotide sequence ID" value="NM_001016508.1"/>
</dbReference>
<dbReference type="SMR" id="Q28CQ7"/>
<dbReference type="FunCoup" id="Q28CQ7">
    <property type="interactions" value="2809"/>
</dbReference>
<dbReference type="STRING" id="8364.ENSXETP00000004288"/>
<dbReference type="PaxDb" id="8364-ENSXETP00000011888"/>
<dbReference type="GeneID" id="549262"/>
<dbReference type="KEGG" id="xtr:549262"/>
<dbReference type="AGR" id="Xenbase:XB-GENE-852675"/>
<dbReference type="CTD" id="79723"/>
<dbReference type="Xenbase" id="XB-GENE-852675">
    <property type="gene designation" value="suv39h2"/>
</dbReference>
<dbReference type="eggNOG" id="KOG1082">
    <property type="taxonomic scope" value="Eukaryota"/>
</dbReference>
<dbReference type="InParanoid" id="Q28CQ7"/>
<dbReference type="OMA" id="CPEEAGF"/>
<dbReference type="OrthoDB" id="308383at2759"/>
<dbReference type="Proteomes" id="UP000008143">
    <property type="component" value="Chromosome 3"/>
</dbReference>
<dbReference type="GO" id="GO:0000775">
    <property type="term" value="C:chromosome, centromeric region"/>
    <property type="evidence" value="ECO:0007669"/>
    <property type="project" value="UniProtKB-SubCell"/>
</dbReference>
<dbReference type="GO" id="GO:0005634">
    <property type="term" value="C:nucleus"/>
    <property type="evidence" value="ECO:0007669"/>
    <property type="project" value="UniProtKB-SubCell"/>
</dbReference>
<dbReference type="GO" id="GO:0140949">
    <property type="term" value="F:histone H3K9 trimethyltransferase activity"/>
    <property type="evidence" value="ECO:0007669"/>
    <property type="project" value="UniProtKB-EC"/>
</dbReference>
<dbReference type="GO" id="GO:0008270">
    <property type="term" value="F:zinc ion binding"/>
    <property type="evidence" value="ECO:0007669"/>
    <property type="project" value="InterPro"/>
</dbReference>
<dbReference type="GO" id="GO:0030154">
    <property type="term" value="P:cell differentiation"/>
    <property type="evidence" value="ECO:0007669"/>
    <property type="project" value="UniProtKB-KW"/>
</dbReference>
<dbReference type="GO" id="GO:0010172">
    <property type="term" value="P:embryonic body morphogenesis"/>
    <property type="evidence" value="ECO:0000315"/>
    <property type="project" value="Xenbase"/>
</dbReference>
<dbReference type="GO" id="GO:0001702">
    <property type="term" value="P:gastrulation with mouth forming second"/>
    <property type="evidence" value="ECO:0000315"/>
    <property type="project" value="Xenbase"/>
</dbReference>
<dbReference type="GO" id="GO:0032259">
    <property type="term" value="P:methylation"/>
    <property type="evidence" value="ECO:0007669"/>
    <property type="project" value="UniProtKB-KW"/>
</dbReference>
<dbReference type="CDD" id="cd18639">
    <property type="entry name" value="CD_SUV39H1_like"/>
    <property type="match status" value="1"/>
</dbReference>
<dbReference type="CDD" id="cd10532">
    <property type="entry name" value="SET_SUV39H2"/>
    <property type="match status" value="1"/>
</dbReference>
<dbReference type="FunFam" id="2.170.270.10:FF:000008">
    <property type="entry name" value="Histone-lysine N-methyltransferase"/>
    <property type="match status" value="1"/>
</dbReference>
<dbReference type="Gene3D" id="2.40.50.40">
    <property type="match status" value="1"/>
</dbReference>
<dbReference type="Gene3D" id="2.170.270.10">
    <property type="entry name" value="SET domain"/>
    <property type="match status" value="1"/>
</dbReference>
<dbReference type="InterPro" id="IPR016197">
    <property type="entry name" value="Chromo-like_dom_sf"/>
</dbReference>
<dbReference type="InterPro" id="IPR000953">
    <property type="entry name" value="Chromo/chromo_shadow_dom"/>
</dbReference>
<dbReference type="InterPro" id="IPR023780">
    <property type="entry name" value="Chromo_domain"/>
</dbReference>
<dbReference type="InterPro" id="IPR023779">
    <property type="entry name" value="Chromodomain_CS"/>
</dbReference>
<dbReference type="InterPro" id="IPR011381">
    <property type="entry name" value="H3-K9_MeTrfase_SUV39H1/2-like"/>
</dbReference>
<dbReference type="InterPro" id="IPR050973">
    <property type="entry name" value="H3K9_Histone-Lys_N-MTase"/>
</dbReference>
<dbReference type="InterPro" id="IPR003616">
    <property type="entry name" value="Post-SET_dom"/>
</dbReference>
<dbReference type="InterPro" id="IPR007728">
    <property type="entry name" value="Pre-SET_dom"/>
</dbReference>
<dbReference type="InterPro" id="IPR001214">
    <property type="entry name" value="SET_dom"/>
</dbReference>
<dbReference type="InterPro" id="IPR046341">
    <property type="entry name" value="SET_dom_sf"/>
</dbReference>
<dbReference type="PANTHER" id="PTHR46223">
    <property type="entry name" value="HISTONE-LYSINE N-METHYLTRANSFERASE SUV39H"/>
    <property type="match status" value="1"/>
</dbReference>
<dbReference type="PANTHER" id="PTHR46223:SF2">
    <property type="entry name" value="HISTONE-LYSINE N-METHYLTRANSFERASE SUV39H2"/>
    <property type="match status" value="1"/>
</dbReference>
<dbReference type="Pfam" id="PF00385">
    <property type="entry name" value="Chromo"/>
    <property type="match status" value="1"/>
</dbReference>
<dbReference type="Pfam" id="PF05033">
    <property type="entry name" value="Pre-SET"/>
    <property type="match status" value="1"/>
</dbReference>
<dbReference type="Pfam" id="PF00856">
    <property type="entry name" value="SET"/>
    <property type="match status" value="1"/>
</dbReference>
<dbReference type="PIRSF" id="PIRSF009343">
    <property type="entry name" value="SUV39_SET"/>
    <property type="match status" value="1"/>
</dbReference>
<dbReference type="SMART" id="SM00298">
    <property type="entry name" value="CHROMO"/>
    <property type="match status" value="1"/>
</dbReference>
<dbReference type="SMART" id="SM00508">
    <property type="entry name" value="PostSET"/>
    <property type="match status" value="1"/>
</dbReference>
<dbReference type="SMART" id="SM00468">
    <property type="entry name" value="PreSET"/>
    <property type="match status" value="1"/>
</dbReference>
<dbReference type="SMART" id="SM00317">
    <property type="entry name" value="SET"/>
    <property type="match status" value="1"/>
</dbReference>
<dbReference type="SUPFAM" id="SSF54160">
    <property type="entry name" value="Chromo domain-like"/>
    <property type="match status" value="1"/>
</dbReference>
<dbReference type="SUPFAM" id="SSF82199">
    <property type="entry name" value="SET domain"/>
    <property type="match status" value="1"/>
</dbReference>
<dbReference type="PROSITE" id="PS00598">
    <property type="entry name" value="CHROMO_1"/>
    <property type="match status" value="1"/>
</dbReference>
<dbReference type="PROSITE" id="PS50013">
    <property type="entry name" value="CHROMO_2"/>
    <property type="match status" value="1"/>
</dbReference>
<dbReference type="PROSITE" id="PS50868">
    <property type="entry name" value="POST_SET"/>
    <property type="match status" value="1"/>
</dbReference>
<dbReference type="PROSITE" id="PS50867">
    <property type="entry name" value="PRE_SET"/>
    <property type="match status" value="1"/>
</dbReference>
<dbReference type="PROSITE" id="PS51579">
    <property type="entry name" value="SAM_MT43_SUVAR39_3"/>
    <property type="match status" value="1"/>
</dbReference>
<dbReference type="PROSITE" id="PS50280">
    <property type="entry name" value="SET"/>
    <property type="match status" value="1"/>
</dbReference>
<feature type="chain" id="PRO_0000281816" description="Histone-lysine N-methyltransferase SUV39H2">
    <location>
        <begin position="1"/>
        <end position="406"/>
    </location>
</feature>
<feature type="domain" description="Chromo" evidence="2">
    <location>
        <begin position="43"/>
        <end position="101"/>
    </location>
</feature>
<feature type="domain" description="Pre-SET" evidence="4">
    <location>
        <begin position="185"/>
        <end position="243"/>
    </location>
</feature>
<feature type="domain" description="SET" evidence="5">
    <location>
        <begin position="246"/>
        <end position="369"/>
    </location>
</feature>
<feature type="domain" description="Post-SET" evidence="3">
    <location>
        <begin position="390"/>
        <end position="406"/>
    </location>
</feature>
<feature type="binding site" evidence="1">
    <location>
        <position position="187"/>
    </location>
    <ligand>
        <name>Zn(2+)</name>
        <dbReference type="ChEBI" id="CHEBI:29105"/>
        <label>1</label>
    </ligand>
</feature>
<feature type="binding site" evidence="1">
    <location>
        <position position="187"/>
    </location>
    <ligand>
        <name>Zn(2+)</name>
        <dbReference type="ChEBI" id="CHEBI:29105"/>
        <label>2</label>
    </ligand>
</feature>
<feature type="binding site" evidence="1">
    <location>
        <position position="189"/>
    </location>
    <ligand>
        <name>Zn(2+)</name>
        <dbReference type="ChEBI" id="CHEBI:29105"/>
        <label>1</label>
    </ligand>
</feature>
<feature type="binding site" evidence="1">
    <location>
        <position position="192"/>
    </location>
    <ligand>
        <name>Zn(2+)</name>
        <dbReference type="ChEBI" id="CHEBI:29105"/>
        <label>1</label>
    </ligand>
</feature>
<feature type="binding site" evidence="1">
    <location>
        <position position="192"/>
    </location>
    <ligand>
        <name>Zn(2+)</name>
        <dbReference type="ChEBI" id="CHEBI:29105"/>
        <label>3</label>
    </ligand>
</feature>
<feature type="binding site" evidence="1">
    <location>
        <position position="197"/>
    </location>
    <ligand>
        <name>Zn(2+)</name>
        <dbReference type="ChEBI" id="CHEBI:29105"/>
        <label>1</label>
    </ligand>
</feature>
<feature type="binding site" evidence="1">
    <location>
        <position position="198"/>
    </location>
    <ligand>
        <name>Zn(2+)</name>
        <dbReference type="ChEBI" id="CHEBI:29105"/>
        <label>1</label>
    </ligand>
</feature>
<feature type="binding site" evidence="1">
    <location>
        <position position="198"/>
    </location>
    <ligand>
        <name>Zn(2+)</name>
        <dbReference type="ChEBI" id="CHEBI:29105"/>
        <label>2</label>
    </ligand>
</feature>
<feature type="binding site" evidence="1">
    <location>
        <position position="225"/>
    </location>
    <ligand>
        <name>Zn(2+)</name>
        <dbReference type="ChEBI" id="CHEBI:29105"/>
        <label>2</label>
    </ligand>
</feature>
<feature type="binding site" evidence="1">
    <location>
        <position position="225"/>
    </location>
    <ligand>
        <name>Zn(2+)</name>
        <dbReference type="ChEBI" id="CHEBI:29105"/>
        <label>3</label>
    </ligand>
</feature>
<feature type="binding site" evidence="1">
    <location>
        <position position="229"/>
    </location>
    <ligand>
        <name>Zn(2+)</name>
        <dbReference type="ChEBI" id="CHEBI:29105"/>
        <label>2</label>
    </ligand>
</feature>
<feature type="binding site" evidence="1">
    <location>
        <position position="231"/>
    </location>
    <ligand>
        <name>Zn(2+)</name>
        <dbReference type="ChEBI" id="CHEBI:29105"/>
        <label>3</label>
    </ligand>
</feature>
<feature type="binding site" evidence="1">
    <location>
        <position position="235"/>
    </location>
    <ligand>
        <name>Zn(2+)</name>
        <dbReference type="ChEBI" id="CHEBI:29105"/>
        <label>3</label>
    </ligand>
</feature>
<feature type="binding site" evidence="1">
    <location>
        <begin position="257"/>
        <end position="259"/>
    </location>
    <ligand>
        <name>S-adenosyl-L-methionine</name>
        <dbReference type="ChEBI" id="CHEBI:59789"/>
    </ligand>
</feature>
<feature type="binding site" evidence="5">
    <location>
        <position position="300"/>
    </location>
    <ligand>
        <name>S-adenosyl-L-methionine</name>
        <dbReference type="ChEBI" id="CHEBI:59789"/>
    </ligand>
</feature>
<feature type="binding site" evidence="1">
    <location>
        <begin position="326"/>
        <end position="327"/>
    </location>
    <ligand>
        <name>S-adenosyl-L-methionine</name>
        <dbReference type="ChEBI" id="CHEBI:59789"/>
    </ligand>
</feature>
<feature type="binding site" evidence="1">
    <location>
        <position position="329"/>
    </location>
    <ligand>
        <name>Zn(2+)</name>
        <dbReference type="ChEBI" id="CHEBI:29105"/>
        <label>4</label>
    </ligand>
</feature>
<feature type="binding site" evidence="1">
    <location>
        <position position="394"/>
    </location>
    <ligand>
        <name>Zn(2+)</name>
        <dbReference type="ChEBI" id="CHEBI:29105"/>
        <label>4</label>
    </ligand>
</feature>
<feature type="binding site" evidence="1">
    <location>
        <position position="396"/>
    </location>
    <ligand>
        <name>Zn(2+)</name>
        <dbReference type="ChEBI" id="CHEBI:29105"/>
        <label>4</label>
    </ligand>
</feature>
<feature type="binding site" evidence="1">
    <location>
        <position position="401"/>
    </location>
    <ligand>
        <name>Zn(2+)</name>
        <dbReference type="ChEBI" id="CHEBI:29105"/>
        <label>4</label>
    </ligand>
</feature>
<comment type="function">
    <text evidence="1">Histone methyltransferase that specifically trimethylates 'Lys-9' of histone H3 using monomethylated H3 'Lys-9' as substrate. H3 'Lys-9' trimethylation represents a specific tag for epigenetic transcriptional repression by recruiting HP1 (CBX1, CBX3 and/or CBX5) proteins to methylated histones. Mainly functions in heterochromatin regions, thereby playing a central role in the establishment of constitutive heterochromatin at pericentric and telomere regions. H3 'Lys-9' trimethylation is also required to direct DNA methylation at pericentric repeats. SUV39H1 is targeted to histone H3 via its interaction with RB1 and is involved in many processes (By similarity).</text>
</comment>
<comment type="catalytic activity">
    <reaction evidence="6">
        <text>L-lysyl(9)-[histone H3] + 3 S-adenosyl-L-methionine = N(6),N(6),N(6)-trimethyl-L-lysyl(9)-[histone H3] + 3 S-adenosyl-L-homocysteine + 3 H(+)</text>
        <dbReference type="Rhea" id="RHEA:60276"/>
        <dbReference type="Rhea" id="RHEA-COMP:15538"/>
        <dbReference type="Rhea" id="RHEA-COMP:15546"/>
        <dbReference type="ChEBI" id="CHEBI:15378"/>
        <dbReference type="ChEBI" id="CHEBI:29969"/>
        <dbReference type="ChEBI" id="CHEBI:57856"/>
        <dbReference type="ChEBI" id="CHEBI:59789"/>
        <dbReference type="ChEBI" id="CHEBI:61961"/>
        <dbReference type="EC" id="2.1.1.355"/>
    </reaction>
</comment>
<comment type="subcellular location">
    <subcellularLocation>
        <location evidence="1">Nucleus</location>
    </subcellularLocation>
    <subcellularLocation>
        <location evidence="1">Chromosome</location>
        <location evidence="1">Centromere</location>
    </subcellularLocation>
    <text evidence="1">Associates with centromeric constitutive heterochromatin.</text>
</comment>
<comment type="domain">
    <text evidence="1">Although the SET domain contains the active site of enzymatic activity, both pre-SET and post-SET domains are required for methyltransferase activity. The SET domain also participates in stable binding to heterochromatin (By similarity).</text>
</comment>
<comment type="domain">
    <text evidence="1">In the pre-SET domain, Cys residues bind 3 zinc ions that are arranged in a triangular cluster; some of these Cys residues contribute to the binding of two zinc ions within the cluster.</text>
</comment>
<comment type="similarity">
    <text evidence="6">Belongs to the class V-like SAM-binding methyltransferase superfamily. Histone-lysine methyltransferase family. Suvar3-9 subfamily.</text>
</comment>
<comment type="sequence caution" evidence="7">
    <conflict type="erroneous initiation">
        <sequence resource="EMBL-CDS" id="CAJ81421"/>
    </conflict>
</comment>
<sequence length="406" mass="46350">MAAARGAWCVPCLASIETLQELCRKEMLICTNIGITRKNLNNYEVEYLCDYRIEKGVEKFFVKWKGWPESCNTWEPTRNLKCPTLLKQFYSDLYNYFCALKPNKKGFLKNSIKSLDPSLSDYIVKKAKQRIALRRWEEELNRKKTHSGTLFVENTVDLEGPPMDFYYINDYKASPGVNTLGEAIVGCDCSDCFKGKCCPTEAGVLFAYNEHRQIKIPPGRPIYECNSRCKCGPDCPNRVVQKGPPYSLCIFRTDNGRGWGVKTLQKIKKNSFVMEYVGEVITSEEAERRGQQYDSRGITYLFDLDYEADEFTVDAARYGNVSHFVNHSCDPNLQVFNVFIDNLDVRLPRIALFSTRNIKAGEELTFDYQMKGSGDFSTDSIDMSPAKKRVRIACKCGAATCRGYLN</sequence>
<organism>
    <name type="scientific">Xenopus tropicalis</name>
    <name type="common">Western clawed frog</name>
    <name type="synonym">Silurana tropicalis</name>
    <dbReference type="NCBI Taxonomy" id="8364"/>
    <lineage>
        <taxon>Eukaryota</taxon>
        <taxon>Metazoa</taxon>
        <taxon>Chordata</taxon>
        <taxon>Craniata</taxon>
        <taxon>Vertebrata</taxon>
        <taxon>Euteleostomi</taxon>
        <taxon>Amphibia</taxon>
        <taxon>Batrachia</taxon>
        <taxon>Anura</taxon>
        <taxon>Pipoidea</taxon>
        <taxon>Pipidae</taxon>
        <taxon>Xenopodinae</taxon>
        <taxon>Xenopus</taxon>
        <taxon>Silurana</taxon>
    </lineage>
</organism>